<organism>
    <name type="scientific">Legionella pneumophila (strain Lens)</name>
    <dbReference type="NCBI Taxonomy" id="297245"/>
    <lineage>
        <taxon>Bacteria</taxon>
        <taxon>Pseudomonadati</taxon>
        <taxon>Pseudomonadota</taxon>
        <taxon>Gammaproteobacteria</taxon>
        <taxon>Legionellales</taxon>
        <taxon>Legionellaceae</taxon>
        <taxon>Legionella</taxon>
    </lineage>
</organism>
<reference key="1">
    <citation type="journal article" date="2004" name="Nat. Genet.">
        <title>Evidence in the Legionella pneumophila genome for exploitation of host cell functions and high genome plasticity.</title>
        <authorList>
            <person name="Cazalet C."/>
            <person name="Rusniok C."/>
            <person name="Brueggemann H."/>
            <person name="Zidane N."/>
            <person name="Magnier A."/>
            <person name="Ma L."/>
            <person name="Tichit M."/>
            <person name="Jarraud S."/>
            <person name="Bouchier C."/>
            <person name="Vandenesch F."/>
            <person name="Kunst F."/>
            <person name="Etienne J."/>
            <person name="Glaser P."/>
            <person name="Buchrieser C."/>
        </authorList>
    </citation>
    <scope>NUCLEOTIDE SEQUENCE [LARGE SCALE GENOMIC DNA]</scope>
    <source>
        <strain>Lens</strain>
    </source>
</reference>
<gene>
    <name evidence="1" type="primary">hisS</name>
    <name type="ordered locus">lpl1482</name>
</gene>
<comment type="catalytic activity">
    <reaction evidence="1">
        <text>tRNA(His) + L-histidine + ATP = L-histidyl-tRNA(His) + AMP + diphosphate + H(+)</text>
        <dbReference type="Rhea" id="RHEA:17313"/>
        <dbReference type="Rhea" id="RHEA-COMP:9665"/>
        <dbReference type="Rhea" id="RHEA-COMP:9689"/>
        <dbReference type="ChEBI" id="CHEBI:15378"/>
        <dbReference type="ChEBI" id="CHEBI:30616"/>
        <dbReference type="ChEBI" id="CHEBI:33019"/>
        <dbReference type="ChEBI" id="CHEBI:57595"/>
        <dbReference type="ChEBI" id="CHEBI:78442"/>
        <dbReference type="ChEBI" id="CHEBI:78527"/>
        <dbReference type="ChEBI" id="CHEBI:456215"/>
        <dbReference type="EC" id="6.1.1.21"/>
    </reaction>
</comment>
<comment type="subunit">
    <text evidence="1">Homodimer.</text>
</comment>
<comment type="subcellular location">
    <subcellularLocation>
        <location evidence="1">Cytoplasm</location>
    </subcellularLocation>
</comment>
<comment type="similarity">
    <text evidence="1">Belongs to the class-II aminoacyl-tRNA synthetase family.</text>
</comment>
<sequence length="426" mass="48466">MVVDKIQAIRGMNDILPDSTSVWRFIEQTFINCLVRYGYKEIRFPIVENTQLFKRTIGEITDIVEKEMYTFNDLNGDSITLRPEGTAGCVRACIEHGLLHNQQQKLWYLGPMFRHERPQKGRYRQFNQFGVEALGITGTAIELELISICRRLWTDLGFSQSVQLQVNSLGEINERQKYRSILVEYLRDHFQILDEDSKRRLDKNPLRVLDSKNPDLQQLIQNAPKLIDVLGDDSREHFQSFCNGLETLGIPYSINPVLVRGLDYYGQTVFEWVTDQLGSQATICAGGRYDMLVEFLGGAPTPAVGFALGLERIFLLMETLNLLNESNNKQSIFIIATNEEAILKALVMAESIRNAHPSLDVITNTTGGGFKSQFKKADKSGARLALILGEDEIAREYVSIKDLRTEIEQISIPMTKINEFLQDYLA</sequence>
<accession>Q5WWH1</accession>
<feature type="chain" id="PRO_0000136181" description="Histidine--tRNA ligase">
    <location>
        <begin position="1"/>
        <end position="426"/>
    </location>
</feature>
<keyword id="KW-0030">Aminoacyl-tRNA synthetase</keyword>
<keyword id="KW-0067">ATP-binding</keyword>
<keyword id="KW-0963">Cytoplasm</keyword>
<keyword id="KW-0436">Ligase</keyword>
<keyword id="KW-0547">Nucleotide-binding</keyword>
<keyword id="KW-0648">Protein biosynthesis</keyword>
<name>SYH_LEGPL</name>
<evidence type="ECO:0000255" key="1">
    <source>
        <dbReference type="HAMAP-Rule" id="MF_00127"/>
    </source>
</evidence>
<proteinExistence type="inferred from homology"/>
<dbReference type="EC" id="6.1.1.21" evidence="1"/>
<dbReference type="EMBL" id="CR628337">
    <property type="protein sequence ID" value="CAH15722.1"/>
    <property type="molecule type" value="Genomic_DNA"/>
</dbReference>
<dbReference type="RefSeq" id="WP_011215530.1">
    <property type="nucleotide sequence ID" value="NC_006369.1"/>
</dbReference>
<dbReference type="SMR" id="Q5WWH1"/>
<dbReference type="KEGG" id="lpf:lpl1482"/>
<dbReference type="LegioList" id="lpl1482"/>
<dbReference type="HOGENOM" id="CLU_025113_1_1_6"/>
<dbReference type="Proteomes" id="UP000002517">
    <property type="component" value="Chromosome"/>
</dbReference>
<dbReference type="GO" id="GO:0005737">
    <property type="term" value="C:cytoplasm"/>
    <property type="evidence" value="ECO:0007669"/>
    <property type="project" value="UniProtKB-SubCell"/>
</dbReference>
<dbReference type="GO" id="GO:0005524">
    <property type="term" value="F:ATP binding"/>
    <property type="evidence" value="ECO:0007669"/>
    <property type="project" value="UniProtKB-UniRule"/>
</dbReference>
<dbReference type="GO" id="GO:0004821">
    <property type="term" value="F:histidine-tRNA ligase activity"/>
    <property type="evidence" value="ECO:0007669"/>
    <property type="project" value="UniProtKB-UniRule"/>
</dbReference>
<dbReference type="GO" id="GO:0006427">
    <property type="term" value="P:histidyl-tRNA aminoacylation"/>
    <property type="evidence" value="ECO:0007669"/>
    <property type="project" value="UniProtKB-UniRule"/>
</dbReference>
<dbReference type="CDD" id="cd00773">
    <property type="entry name" value="HisRS-like_core"/>
    <property type="match status" value="1"/>
</dbReference>
<dbReference type="CDD" id="cd00859">
    <property type="entry name" value="HisRS_anticodon"/>
    <property type="match status" value="1"/>
</dbReference>
<dbReference type="FunFam" id="3.30.930.10:FF:000005">
    <property type="entry name" value="Histidine--tRNA ligase"/>
    <property type="match status" value="1"/>
</dbReference>
<dbReference type="Gene3D" id="3.40.50.800">
    <property type="entry name" value="Anticodon-binding domain"/>
    <property type="match status" value="1"/>
</dbReference>
<dbReference type="Gene3D" id="3.30.930.10">
    <property type="entry name" value="Bira Bifunctional Protein, Domain 2"/>
    <property type="match status" value="1"/>
</dbReference>
<dbReference type="HAMAP" id="MF_00127">
    <property type="entry name" value="His_tRNA_synth"/>
    <property type="match status" value="1"/>
</dbReference>
<dbReference type="InterPro" id="IPR006195">
    <property type="entry name" value="aa-tRNA-synth_II"/>
</dbReference>
<dbReference type="InterPro" id="IPR045864">
    <property type="entry name" value="aa-tRNA-synth_II/BPL/LPL"/>
</dbReference>
<dbReference type="InterPro" id="IPR004154">
    <property type="entry name" value="Anticodon-bd"/>
</dbReference>
<dbReference type="InterPro" id="IPR036621">
    <property type="entry name" value="Anticodon-bd_dom_sf"/>
</dbReference>
<dbReference type="InterPro" id="IPR015807">
    <property type="entry name" value="His-tRNA-ligase"/>
</dbReference>
<dbReference type="InterPro" id="IPR041715">
    <property type="entry name" value="HisRS-like_core"/>
</dbReference>
<dbReference type="InterPro" id="IPR004516">
    <property type="entry name" value="HisRS/HisZ"/>
</dbReference>
<dbReference type="InterPro" id="IPR033656">
    <property type="entry name" value="HisRS_anticodon"/>
</dbReference>
<dbReference type="NCBIfam" id="TIGR00442">
    <property type="entry name" value="hisS"/>
    <property type="match status" value="1"/>
</dbReference>
<dbReference type="PANTHER" id="PTHR43707:SF1">
    <property type="entry name" value="HISTIDINE--TRNA LIGASE, MITOCHONDRIAL-RELATED"/>
    <property type="match status" value="1"/>
</dbReference>
<dbReference type="PANTHER" id="PTHR43707">
    <property type="entry name" value="HISTIDYL-TRNA SYNTHETASE"/>
    <property type="match status" value="1"/>
</dbReference>
<dbReference type="Pfam" id="PF03129">
    <property type="entry name" value="HGTP_anticodon"/>
    <property type="match status" value="1"/>
</dbReference>
<dbReference type="Pfam" id="PF13393">
    <property type="entry name" value="tRNA-synt_His"/>
    <property type="match status" value="1"/>
</dbReference>
<dbReference type="PIRSF" id="PIRSF001549">
    <property type="entry name" value="His-tRNA_synth"/>
    <property type="match status" value="1"/>
</dbReference>
<dbReference type="SUPFAM" id="SSF52954">
    <property type="entry name" value="Class II aaRS ABD-related"/>
    <property type="match status" value="1"/>
</dbReference>
<dbReference type="SUPFAM" id="SSF55681">
    <property type="entry name" value="Class II aaRS and biotin synthetases"/>
    <property type="match status" value="1"/>
</dbReference>
<dbReference type="PROSITE" id="PS50862">
    <property type="entry name" value="AA_TRNA_LIGASE_II"/>
    <property type="match status" value="1"/>
</dbReference>
<protein>
    <recommendedName>
        <fullName evidence="1">Histidine--tRNA ligase</fullName>
        <ecNumber evidence="1">6.1.1.21</ecNumber>
    </recommendedName>
    <alternativeName>
        <fullName evidence="1">Histidyl-tRNA synthetase</fullName>
        <shortName evidence="1">HisRS</shortName>
    </alternativeName>
</protein>